<proteinExistence type="evidence at protein level"/>
<protein>
    <recommendedName>
        <fullName evidence="4">Solute-binding protein Csal_2479</fullName>
    </recommendedName>
</protein>
<accession>Q1QUN2</accession>
<evidence type="ECO:0000250" key="1">
    <source>
        <dbReference type="UniProtKB" id="P37735"/>
    </source>
</evidence>
<evidence type="ECO:0000255" key="2"/>
<evidence type="ECO:0000269" key="3">
    <source>
    </source>
</evidence>
<evidence type="ECO:0000305" key="4"/>
<evidence type="ECO:0000312" key="5">
    <source>
        <dbReference type="EMBL" id="ABE59826.1"/>
    </source>
</evidence>
<evidence type="ECO:0007744" key="6">
    <source>
        <dbReference type="PDB" id="4P1L"/>
    </source>
</evidence>
<evidence type="ECO:0007744" key="7">
    <source>
        <dbReference type="PDB" id="4P3L"/>
    </source>
</evidence>
<evidence type="ECO:0007829" key="8">
    <source>
        <dbReference type="PDB" id="4P1L"/>
    </source>
</evidence>
<evidence type="ECO:0007829" key="9">
    <source>
        <dbReference type="PDB" id="4P3L"/>
    </source>
</evidence>
<sequence>MQTNKRLKMASCVKAAAMLGMLLSVSISTTAQADSWRGWNIHPPSYPNGKALESFAKEVAEKTEGRVEPKVYHNAVLGDQPDAIEQTRSGALDFANFNMGPMGPIVPAANVLSLPFIFKSPDDMYRIMDGEIGERFADALAEKNLIVLSWFGSGARSLYNTDHPVETPDDVEGLKVRVMNNDLYVQMIDEMGGNATPMAYGEVYQSLKTGVIDGAENNYPSYESSGHYEVANYYSLTEHLILPECLCVAKASWEELSEKDRQAIREAAEDAAKEQRALWEEGVQASKQKILDAGVKINEVDDKSAFQAKMQPIYDQFVQEHPELESLVTDIQDAQS</sequence>
<name>DCTP_CHRSD</name>
<gene>
    <name evidence="4" type="primary">dctP</name>
    <name evidence="5" type="ordered locus">Csal_2479</name>
</gene>
<reference key="1">
    <citation type="journal article" date="2011" name="Stand. Genomic Sci.">
        <title>Complete genome sequence of the halophilic and highly halotolerant Chromohalobacter salexigens type strain (1H11(T)).</title>
        <authorList>
            <person name="Copeland A."/>
            <person name="O'Connor K."/>
            <person name="Lucas S."/>
            <person name="Lapidus A."/>
            <person name="Berry K.W."/>
            <person name="Detter J.C."/>
            <person name="Del Rio T.G."/>
            <person name="Hammon N."/>
            <person name="Dalin E."/>
            <person name="Tice H."/>
            <person name="Pitluck S."/>
            <person name="Bruce D."/>
            <person name="Goodwin L."/>
            <person name="Han C."/>
            <person name="Tapia R."/>
            <person name="Saunders E."/>
            <person name="Schmutz J."/>
            <person name="Brettin T."/>
            <person name="Larimer F."/>
            <person name="Land M."/>
            <person name="Hauser L."/>
            <person name="Vargas C."/>
            <person name="Nieto J.J."/>
            <person name="Kyrpides N.C."/>
            <person name="Ivanova N."/>
            <person name="Goker M."/>
            <person name="Klenk H.P."/>
            <person name="Csonka L.N."/>
            <person name="Woyke T."/>
        </authorList>
    </citation>
    <scope>NUCLEOTIDE SEQUENCE [LARGE SCALE GENOMIC DNA]</scope>
    <source>
        <strain>ATCC BAA-138 / DSM 3043 / CIP 106854 / NCIMB 13768 / 1H11</strain>
    </source>
</reference>
<reference evidence="6 7" key="2">
    <citation type="journal article" date="2015" name="Biochemistry">
        <title>Experimental strategies for functional annotation and metabolism discovery: targeted screening of solute binding proteins and unbiased panning of metabolomes.</title>
        <authorList>
            <person name="Vetting M.W."/>
            <person name="Al-Obaidi N."/>
            <person name="Zhao S."/>
            <person name="San Francisco B."/>
            <person name="Kim J."/>
            <person name="Wichelecki D.J."/>
            <person name="Bouvier J.T."/>
            <person name="Solbiati J.O."/>
            <person name="Vu H."/>
            <person name="Zhang X."/>
            <person name="Rodionov D.A."/>
            <person name="Love J.D."/>
            <person name="Hillerich B.S."/>
            <person name="Seidel R.D."/>
            <person name="Quinn R.J."/>
            <person name="Osterman A.L."/>
            <person name="Cronan J.E."/>
            <person name="Jacobson M.P."/>
            <person name="Gerlt J.A."/>
            <person name="Almo S.C."/>
        </authorList>
    </citation>
    <scope>X-RAY CRYSTALLOGRAPHY (1.70 ANGSTROMS) OF 34-336 IN COMPLEX WITH GLUCURONATE</scope>
    <scope>FUNCTION</scope>
</reference>
<feature type="signal peptide" evidence="2">
    <location>
        <begin position="1"/>
        <end position="33"/>
    </location>
</feature>
<feature type="chain" id="PRO_5004196113" description="Solute-binding protein Csal_2479" evidence="2">
    <location>
        <begin position="34"/>
        <end position="336"/>
    </location>
</feature>
<feature type="binding site" evidence="6 7">
    <location>
        <position position="42"/>
    </location>
    <ligand>
        <name>beta-D-glucuronate</name>
        <dbReference type="ChEBI" id="CHEBI:85313"/>
    </ligand>
</feature>
<feature type="binding site" evidence="6 7">
    <location>
        <position position="80"/>
    </location>
    <ligand>
        <name>beta-D-glucuronate</name>
        <dbReference type="ChEBI" id="CHEBI:85313"/>
    </ligand>
</feature>
<feature type="binding site" evidence="6 7">
    <location>
        <position position="156"/>
    </location>
    <ligand>
        <name>beta-D-glucuronate</name>
        <dbReference type="ChEBI" id="CHEBI:85313"/>
    </ligand>
</feature>
<feature type="binding site" evidence="6 7">
    <location>
        <position position="177"/>
    </location>
    <ligand>
        <name>beta-D-glucuronate</name>
        <dbReference type="ChEBI" id="CHEBI:85313"/>
    </ligand>
</feature>
<feature type="binding site" evidence="6 7">
    <location>
        <position position="200"/>
    </location>
    <ligand>
        <name>beta-D-glucuronate</name>
        <dbReference type="ChEBI" id="CHEBI:85313"/>
    </ligand>
</feature>
<feature type="binding site" evidence="6 7">
    <location>
        <begin position="217"/>
        <end position="218"/>
    </location>
    <ligand>
        <name>beta-D-glucuronate</name>
        <dbReference type="ChEBI" id="CHEBI:85313"/>
    </ligand>
</feature>
<feature type="binding site" evidence="6 7">
    <location>
        <position position="244"/>
    </location>
    <ligand>
        <name>beta-D-glucuronate</name>
        <dbReference type="ChEBI" id="CHEBI:85313"/>
    </ligand>
</feature>
<feature type="strand" evidence="8">
    <location>
        <begin position="36"/>
        <end position="39"/>
    </location>
</feature>
<feature type="helix" evidence="8">
    <location>
        <begin position="47"/>
        <end position="62"/>
    </location>
</feature>
<feature type="turn" evidence="8">
    <location>
        <begin position="63"/>
        <end position="65"/>
    </location>
</feature>
<feature type="strand" evidence="8">
    <location>
        <begin position="69"/>
        <end position="72"/>
    </location>
</feature>
<feature type="turn" evidence="8">
    <location>
        <begin position="74"/>
        <end position="77"/>
    </location>
</feature>
<feature type="helix" evidence="8">
    <location>
        <begin position="80"/>
        <end position="88"/>
    </location>
</feature>
<feature type="strand" evidence="8">
    <location>
        <begin position="94"/>
        <end position="99"/>
    </location>
</feature>
<feature type="turn" evidence="8">
    <location>
        <begin position="100"/>
        <end position="105"/>
    </location>
</feature>
<feature type="helix" evidence="8">
    <location>
        <begin position="107"/>
        <end position="113"/>
    </location>
</feature>
<feature type="strand" evidence="9">
    <location>
        <begin position="118"/>
        <end position="120"/>
    </location>
</feature>
<feature type="helix" evidence="8">
    <location>
        <begin position="121"/>
        <end position="128"/>
    </location>
</feature>
<feature type="helix" evidence="8">
    <location>
        <begin position="131"/>
        <end position="142"/>
    </location>
</feature>
<feature type="strand" evidence="8">
    <location>
        <begin position="145"/>
        <end position="151"/>
    </location>
</feature>
<feature type="strand" evidence="8">
    <location>
        <begin position="156"/>
        <end position="162"/>
    </location>
</feature>
<feature type="helix" evidence="8">
    <location>
        <begin position="168"/>
        <end position="171"/>
    </location>
</feature>
<feature type="strand" evidence="8">
    <location>
        <begin position="175"/>
        <end position="178"/>
    </location>
</feature>
<feature type="helix" evidence="8">
    <location>
        <begin position="182"/>
        <end position="191"/>
    </location>
</feature>
<feature type="strand" evidence="8">
    <location>
        <begin position="193"/>
        <end position="197"/>
    </location>
</feature>
<feature type="helix" evidence="8">
    <location>
        <begin position="200"/>
        <end position="202"/>
    </location>
</feature>
<feature type="helix" evidence="8">
    <location>
        <begin position="203"/>
        <end position="208"/>
    </location>
</feature>
<feature type="strand" evidence="8">
    <location>
        <begin position="213"/>
        <end position="217"/>
    </location>
</feature>
<feature type="helix" evidence="8">
    <location>
        <begin position="219"/>
        <end position="224"/>
    </location>
</feature>
<feature type="helix" evidence="8">
    <location>
        <begin position="227"/>
        <end position="229"/>
    </location>
</feature>
<feature type="strand" evidence="8">
    <location>
        <begin position="233"/>
        <end position="240"/>
    </location>
</feature>
<feature type="strand" evidence="8">
    <location>
        <begin position="244"/>
        <end position="249"/>
    </location>
</feature>
<feature type="helix" evidence="8">
    <location>
        <begin position="250"/>
        <end position="255"/>
    </location>
</feature>
<feature type="helix" evidence="8">
    <location>
        <begin position="258"/>
        <end position="292"/>
    </location>
</feature>
<feature type="strand" evidence="8">
    <location>
        <begin position="296"/>
        <end position="298"/>
    </location>
</feature>
<feature type="helix" evidence="8">
    <location>
        <begin position="303"/>
        <end position="308"/>
    </location>
</feature>
<feature type="helix" evidence="8">
    <location>
        <begin position="311"/>
        <end position="320"/>
    </location>
</feature>
<feature type="helix" evidence="8">
    <location>
        <begin position="322"/>
        <end position="324"/>
    </location>
</feature>
<feature type="helix" evidence="8">
    <location>
        <begin position="325"/>
        <end position="333"/>
    </location>
</feature>
<organism evidence="5">
    <name type="scientific">Chromohalobacter salexigens (strain ATCC BAA-138 / DSM 3043 / CIP 106854 / NCIMB 13768 / 1H11)</name>
    <dbReference type="NCBI Taxonomy" id="290398"/>
    <lineage>
        <taxon>Bacteria</taxon>
        <taxon>Pseudomonadati</taxon>
        <taxon>Pseudomonadota</taxon>
        <taxon>Gammaproteobacteria</taxon>
        <taxon>Oceanospirillales</taxon>
        <taxon>Halomonadaceae</taxon>
        <taxon>Chromohalobacter</taxon>
    </lineage>
</organism>
<keyword id="KW-0002">3D-structure</keyword>
<keyword id="KW-0574">Periplasm</keyword>
<keyword id="KW-1185">Reference proteome</keyword>
<keyword id="KW-0732">Signal</keyword>
<keyword id="KW-0762">Sugar transport</keyword>
<keyword id="KW-0813">Transport</keyword>
<comment type="function">
    <text evidence="3 4">Solute-binding protein that binds D-glucuronate (in vitro) (PubMed:25540822). Probably part of a tripartite ATP-independent periplasmic (TRAP) transport system that mediates solute transport into the cytoplasm.</text>
</comment>
<comment type="subunit">
    <text evidence="1">The complex is comprised of an extracytoplasmic solute-binding protein and a heteromeric permease formed by two transmembrane proteins.</text>
</comment>
<comment type="subcellular location">
    <subcellularLocation>
        <location evidence="1">Periplasm</location>
    </subcellularLocation>
</comment>
<comment type="similarity">
    <text evidence="4">Belongs to the bacterial solute-binding protein 7 family.</text>
</comment>
<dbReference type="EMBL" id="CP000285">
    <property type="protein sequence ID" value="ABE59826.1"/>
    <property type="molecule type" value="Genomic_DNA"/>
</dbReference>
<dbReference type="RefSeq" id="WP_011507772.1">
    <property type="nucleotide sequence ID" value="NC_007963.1"/>
</dbReference>
<dbReference type="PDB" id="4P1L">
    <property type="method" value="X-ray"/>
    <property type="resolution" value="1.70 A"/>
    <property type="chains" value="A/B=34-336"/>
</dbReference>
<dbReference type="PDB" id="4P3L">
    <property type="method" value="X-ray"/>
    <property type="resolution" value="1.80 A"/>
    <property type="chains" value="A=34-336"/>
</dbReference>
<dbReference type="PDBsum" id="4P1L"/>
<dbReference type="PDBsum" id="4P3L"/>
<dbReference type="SMR" id="Q1QUN2"/>
<dbReference type="STRING" id="290398.Csal_2479"/>
<dbReference type="GeneID" id="95335185"/>
<dbReference type="KEGG" id="csa:Csal_2479"/>
<dbReference type="eggNOG" id="COG1638">
    <property type="taxonomic scope" value="Bacteria"/>
</dbReference>
<dbReference type="HOGENOM" id="CLU_036176_4_0_6"/>
<dbReference type="OrthoDB" id="9771186at2"/>
<dbReference type="EvolutionaryTrace" id="Q1QUN2"/>
<dbReference type="Proteomes" id="UP000000239">
    <property type="component" value="Chromosome"/>
</dbReference>
<dbReference type="GO" id="GO:0030288">
    <property type="term" value="C:outer membrane-bounded periplasmic space"/>
    <property type="evidence" value="ECO:0007669"/>
    <property type="project" value="InterPro"/>
</dbReference>
<dbReference type="GO" id="GO:0030246">
    <property type="term" value="F:carbohydrate binding"/>
    <property type="evidence" value="ECO:0007669"/>
    <property type="project" value="TreeGrafter"/>
</dbReference>
<dbReference type="GO" id="GO:0055085">
    <property type="term" value="P:transmembrane transport"/>
    <property type="evidence" value="ECO:0007669"/>
    <property type="project" value="InterPro"/>
</dbReference>
<dbReference type="CDD" id="cd13671">
    <property type="entry name" value="PBP2_TRAP_SBP_like_3"/>
    <property type="match status" value="1"/>
</dbReference>
<dbReference type="Gene3D" id="3.40.190.170">
    <property type="entry name" value="Bacterial extracellular solute-binding protein, family 7"/>
    <property type="match status" value="1"/>
</dbReference>
<dbReference type="InterPro" id="IPR018389">
    <property type="entry name" value="DctP_fam"/>
</dbReference>
<dbReference type="InterPro" id="IPR004682">
    <property type="entry name" value="TRAP_DctP"/>
</dbReference>
<dbReference type="InterPro" id="IPR038404">
    <property type="entry name" value="TRAP_DctP_sf"/>
</dbReference>
<dbReference type="NCBIfam" id="TIGR00787">
    <property type="entry name" value="dctP"/>
    <property type="match status" value="1"/>
</dbReference>
<dbReference type="NCBIfam" id="NF037995">
    <property type="entry name" value="TRAP_S1"/>
    <property type="match status" value="1"/>
</dbReference>
<dbReference type="PANTHER" id="PTHR33376">
    <property type="match status" value="1"/>
</dbReference>
<dbReference type="PANTHER" id="PTHR33376:SF2">
    <property type="entry name" value="DICARBOXYLATE-BINDING PERIPLASMIC PROTEIN"/>
    <property type="match status" value="1"/>
</dbReference>
<dbReference type="Pfam" id="PF03480">
    <property type="entry name" value="DctP"/>
    <property type="match status" value="1"/>
</dbReference>
<dbReference type="PIRSF" id="PIRSF006470">
    <property type="entry name" value="DctB"/>
    <property type="match status" value="1"/>
</dbReference>